<dbReference type="EC" id="3.2.2.9" evidence="1"/>
<dbReference type="EMBL" id="CR522870">
    <property type="protein sequence ID" value="CAG35257.1"/>
    <property type="status" value="ALT_INIT"/>
    <property type="molecule type" value="Genomic_DNA"/>
</dbReference>
<dbReference type="SMR" id="Q6AQW7"/>
<dbReference type="STRING" id="177439.DP0528"/>
<dbReference type="KEGG" id="dps:DP0528"/>
<dbReference type="eggNOG" id="COG0775">
    <property type="taxonomic scope" value="Bacteria"/>
</dbReference>
<dbReference type="HOGENOM" id="CLU_031248_2_2_7"/>
<dbReference type="OrthoDB" id="9792278at2"/>
<dbReference type="UniPathway" id="UPA00904">
    <property type="reaction ID" value="UER00871"/>
</dbReference>
<dbReference type="Proteomes" id="UP000000602">
    <property type="component" value="Chromosome"/>
</dbReference>
<dbReference type="GO" id="GO:0005829">
    <property type="term" value="C:cytosol"/>
    <property type="evidence" value="ECO:0007669"/>
    <property type="project" value="TreeGrafter"/>
</dbReference>
<dbReference type="GO" id="GO:0008782">
    <property type="term" value="F:adenosylhomocysteine nucleosidase activity"/>
    <property type="evidence" value="ECO:0007669"/>
    <property type="project" value="UniProtKB-UniRule"/>
</dbReference>
<dbReference type="GO" id="GO:0008930">
    <property type="term" value="F:methylthioadenosine nucleosidase activity"/>
    <property type="evidence" value="ECO:0007669"/>
    <property type="project" value="UniProtKB-UniRule"/>
</dbReference>
<dbReference type="GO" id="GO:0019509">
    <property type="term" value="P:L-methionine salvage from methylthioadenosine"/>
    <property type="evidence" value="ECO:0007669"/>
    <property type="project" value="UniProtKB-UniRule"/>
</dbReference>
<dbReference type="GO" id="GO:0019284">
    <property type="term" value="P:L-methionine salvage from S-adenosylmethionine"/>
    <property type="evidence" value="ECO:0007669"/>
    <property type="project" value="TreeGrafter"/>
</dbReference>
<dbReference type="GO" id="GO:0009164">
    <property type="term" value="P:nucleoside catabolic process"/>
    <property type="evidence" value="ECO:0007669"/>
    <property type="project" value="InterPro"/>
</dbReference>
<dbReference type="CDD" id="cd09008">
    <property type="entry name" value="MTAN"/>
    <property type="match status" value="1"/>
</dbReference>
<dbReference type="FunFam" id="3.40.50.1580:FF:000001">
    <property type="entry name" value="MTA/SAH nucleosidase family protein"/>
    <property type="match status" value="1"/>
</dbReference>
<dbReference type="Gene3D" id="3.40.50.1580">
    <property type="entry name" value="Nucleoside phosphorylase domain"/>
    <property type="match status" value="1"/>
</dbReference>
<dbReference type="HAMAP" id="MF_01684">
    <property type="entry name" value="Salvage_MtnN"/>
    <property type="match status" value="1"/>
</dbReference>
<dbReference type="InterPro" id="IPR010049">
    <property type="entry name" value="MTA_SAH_Nsdase"/>
</dbReference>
<dbReference type="InterPro" id="IPR000845">
    <property type="entry name" value="Nucleoside_phosphorylase_d"/>
</dbReference>
<dbReference type="InterPro" id="IPR035994">
    <property type="entry name" value="Nucleoside_phosphorylase_sf"/>
</dbReference>
<dbReference type="NCBIfam" id="TIGR01704">
    <property type="entry name" value="MTA_SAH-Nsdase"/>
    <property type="match status" value="1"/>
</dbReference>
<dbReference type="NCBIfam" id="NF004079">
    <property type="entry name" value="PRK05584.1"/>
    <property type="match status" value="1"/>
</dbReference>
<dbReference type="PANTHER" id="PTHR46832">
    <property type="entry name" value="5'-METHYLTHIOADENOSINE/S-ADENOSYLHOMOCYSTEINE NUCLEOSIDASE"/>
    <property type="match status" value="1"/>
</dbReference>
<dbReference type="PANTHER" id="PTHR46832:SF1">
    <property type="entry name" value="5'-METHYLTHIOADENOSINE_S-ADENOSYLHOMOCYSTEINE NUCLEOSIDASE"/>
    <property type="match status" value="1"/>
</dbReference>
<dbReference type="Pfam" id="PF01048">
    <property type="entry name" value="PNP_UDP_1"/>
    <property type="match status" value="1"/>
</dbReference>
<dbReference type="SUPFAM" id="SSF53167">
    <property type="entry name" value="Purine and uridine phosphorylases"/>
    <property type="match status" value="1"/>
</dbReference>
<evidence type="ECO:0000255" key="1">
    <source>
        <dbReference type="HAMAP-Rule" id="MF_01684"/>
    </source>
</evidence>
<evidence type="ECO:0000305" key="2"/>
<accession>Q6AQW7</accession>
<feature type="chain" id="PRO_0000359288" description="5'-methylthioadenosine/S-adenosylhomocysteine nucleosidase">
    <location>
        <begin position="1"/>
        <end position="234"/>
    </location>
</feature>
<feature type="active site" description="Proton acceptor" evidence="1">
    <location>
        <position position="12"/>
    </location>
</feature>
<feature type="active site" description="Proton donor" evidence="1">
    <location>
        <position position="197"/>
    </location>
</feature>
<feature type="binding site" evidence="1">
    <location>
        <position position="78"/>
    </location>
    <ligand>
        <name>substrate</name>
    </ligand>
</feature>
<feature type="binding site" evidence="1">
    <location>
        <position position="152"/>
    </location>
    <ligand>
        <name>substrate</name>
    </ligand>
</feature>
<feature type="binding site" evidence="1">
    <location>
        <begin position="173"/>
        <end position="174"/>
    </location>
    <ligand>
        <name>substrate</name>
    </ligand>
</feature>
<proteinExistence type="inferred from homology"/>
<sequence>MKVGIIAAMEEELTLLVDRLDNCEEVQLGHCKYYTGQINGVEVGLMRCGIGKVNAAIGTTLMIDKLKPKCLINTGVAGGFINEMNVGDIVISSSVRHHDADATAFGYELGQIPDMPSEFQADRRLVEMATKVNLKSKARIFEGPVFSGDSFIHTTEQVENILKNFPQIMAVEMEGASIAQTSHLFNIPFVLIRSISDKVRETKSADTYTQSMEESAKNSVQVVFEMVEQLKEGM</sequence>
<reference key="1">
    <citation type="journal article" date="2004" name="Environ. Microbiol.">
        <title>The genome of Desulfotalea psychrophila, a sulfate-reducing bacterium from permanently cold Arctic sediments.</title>
        <authorList>
            <person name="Rabus R."/>
            <person name="Ruepp A."/>
            <person name="Frickey T."/>
            <person name="Rattei T."/>
            <person name="Fartmann B."/>
            <person name="Stark M."/>
            <person name="Bauer M."/>
            <person name="Zibat A."/>
            <person name="Lombardot T."/>
            <person name="Becker I."/>
            <person name="Amann J."/>
            <person name="Gellner K."/>
            <person name="Teeling H."/>
            <person name="Leuschner W.D."/>
            <person name="Gloeckner F.-O."/>
            <person name="Lupas A.N."/>
            <person name="Amann R."/>
            <person name="Klenk H.-P."/>
        </authorList>
    </citation>
    <scope>NUCLEOTIDE SEQUENCE [LARGE SCALE GENOMIC DNA]</scope>
    <source>
        <strain>DSM 12343 / LSv54</strain>
    </source>
</reference>
<keyword id="KW-0028">Amino-acid biosynthesis</keyword>
<keyword id="KW-0378">Hydrolase</keyword>
<keyword id="KW-0486">Methionine biosynthesis</keyword>
<keyword id="KW-1185">Reference proteome</keyword>
<organism>
    <name type="scientific">Desulfotalea psychrophila (strain LSv54 / DSM 12343)</name>
    <dbReference type="NCBI Taxonomy" id="177439"/>
    <lineage>
        <taxon>Bacteria</taxon>
        <taxon>Pseudomonadati</taxon>
        <taxon>Thermodesulfobacteriota</taxon>
        <taxon>Desulfobulbia</taxon>
        <taxon>Desulfobulbales</taxon>
        <taxon>Desulfocapsaceae</taxon>
        <taxon>Desulfotalea</taxon>
    </lineage>
</organism>
<comment type="function">
    <text evidence="1">Catalyzes the irreversible cleavage of the glycosidic bond in both 5'-methylthioadenosine (MTA) and S-adenosylhomocysteine (SAH/AdoHcy) to adenine and the corresponding thioribose, 5'-methylthioribose and S-ribosylhomocysteine, respectively. Also cleaves 5'-deoxyadenosine, a toxic by-product of radical S-adenosylmethionine (SAM) enzymes, into 5-deoxyribose and adenine.</text>
</comment>
<comment type="catalytic activity">
    <reaction evidence="1">
        <text>S-adenosyl-L-homocysteine + H2O = S-(5-deoxy-D-ribos-5-yl)-L-homocysteine + adenine</text>
        <dbReference type="Rhea" id="RHEA:17805"/>
        <dbReference type="ChEBI" id="CHEBI:15377"/>
        <dbReference type="ChEBI" id="CHEBI:16708"/>
        <dbReference type="ChEBI" id="CHEBI:57856"/>
        <dbReference type="ChEBI" id="CHEBI:58195"/>
        <dbReference type="EC" id="3.2.2.9"/>
    </reaction>
</comment>
<comment type="catalytic activity">
    <reaction evidence="1">
        <text>S-methyl-5'-thioadenosine + H2O = 5-(methylsulfanyl)-D-ribose + adenine</text>
        <dbReference type="Rhea" id="RHEA:13617"/>
        <dbReference type="ChEBI" id="CHEBI:15377"/>
        <dbReference type="ChEBI" id="CHEBI:16708"/>
        <dbReference type="ChEBI" id="CHEBI:17509"/>
        <dbReference type="ChEBI" id="CHEBI:78440"/>
        <dbReference type="EC" id="3.2.2.9"/>
    </reaction>
</comment>
<comment type="catalytic activity">
    <reaction evidence="1">
        <text>5'-deoxyadenosine + H2O = 5-deoxy-D-ribose + adenine</text>
        <dbReference type="Rhea" id="RHEA:29859"/>
        <dbReference type="ChEBI" id="CHEBI:15377"/>
        <dbReference type="ChEBI" id="CHEBI:16708"/>
        <dbReference type="ChEBI" id="CHEBI:17319"/>
        <dbReference type="ChEBI" id="CHEBI:149540"/>
        <dbReference type="EC" id="3.2.2.9"/>
    </reaction>
    <physiologicalReaction direction="left-to-right" evidence="1">
        <dbReference type="Rhea" id="RHEA:29860"/>
    </physiologicalReaction>
</comment>
<comment type="pathway">
    <text evidence="1">Amino-acid biosynthesis; L-methionine biosynthesis via salvage pathway; S-methyl-5-thio-alpha-D-ribose 1-phosphate from S-methyl-5'-thioadenosine (hydrolase route): step 1/2.</text>
</comment>
<comment type="similarity">
    <text evidence="1">Belongs to the PNP/UDP phosphorylase family. MtnN subfamily.</text>
</comment>
<comment type="sequence caution" evidence="2">
    <conflict type="erroneous initiation">
        <sequence resource="EMBL-CDS" id="CAG35257"/>
    </conflict>
</comment>
<gene>
    <name evidence="1" type="primary">mtnN</name>
    <name type="ordered locus">DP0528</name>
</gene>
<protein>
    <recommendedName>
        <fullName evidence="1">5'-methylthioadenosine/S-adenosylhomocysteine nucleosidase</fullName>
        <shortName evidence="1">MTA/SAH nucleosidase</shortName>
        <shortName evidence="1">MTAN</shortName>
        <ecNumber evidence="1">3.2.2.9</ecNumber>
    </recommendedName>
    <alternativeName>
        <fullName evidence="1">5'-deoxyadenosine nucleosidase</fullName>
        <shortName evidence="1">DOA nucleosidase</shortName>
        <shortName evidence="1">dAdo nucleosidase</shortName>
    </alternativeName>
    <alternativeName>
        <fullName evidence="1">5'-methylthioadenosine nucleosidase</fullName>
        <shortName evidence="1">MTA nucleosidase</shortName>
    </alternativeName>
    <alternativeName>
        <fullName evidence="1">S-adenosylhomocysteine nucleosidase</fullName>
        <shortName evidence="1">AdoHcy nucleosidase</shortName>
        <shortName evidence="1">SAH nucleosidase</shortName>
        <shortName evidence="1">SRH nucleosidase</shortName>
    </alternativeName>
</protein>
<name>MTNN_DESPS</name>